<evidence type="ECO:0000250" key="1">
    <source>
        <dbReference type="UniProtKB" id="P00415"/>
    </source>
</evidence>
<evidence type="ECO:0000250" key="2">
    <source>
        <dbReference type="UniProtKB" id="P00420"/>
    </source>
</evidence>
<evidence type="ECO:0000305" key="3"/>
<proteinExistence type="inferred from homology"/>
<name>COX3_MYXGL</name>
<geneLocation type="mitochondrion"/>
<dbReference type="EC" id="7.1.1.9"/>
<dbReference type="EMBL" id="Y15184">
    <property type="protein sequence ID" value="CAA75483.1"/>
    <property type="molecule type" value="Genomic_DNA"/>
</dbReference>
<dbReference type="EMBL" id="AJ404477">
    <property type="protein sequence ID" value="CAC20655.1"/>
    <property type="molecule type" value="Genomic_DNA"/>
</dbReference>
<dbReference type="SMR" id="O63915"/>
<dbReference type="CTD" id="4514"/>
<dbReference type="GO" id="GO:0005743">
    <property type="term" value="C:mitochondrial inner membrane"/>
    <property type="evidence" value="ECO:0007669"/>
    <property type="project" value="UniProtKB-SubCell"/>
</dbReference>
<dbReference type="GO" id="GO:0004129">
    <property type="term" value="F:cytochrome-c oxidase activity"/>
    <property type="evidence" value="ECO:0007669"/>
    <property type="project" value="UniProtKB-EC"/>
</dbReference>
<dbReference type="GO" id="GO:0006123">
    <property type="term" value="P:mitochondrial electron transport, cytochrome c to oxygen"/>
    <property type="evidence" value="ECO:0007669"/>
    <property type="project" value="TreeGrafter"/>
</dbReference>
<dbReference type="CDD" id="cd01665">
    <property type="entry name" value="Cyt_c_Oxidase_III"/>
    <property type="match status" value="1"/>
</dbReference>
<dbReference type="FunFam" id="1.10.287.70:FF:000048">
    <property type="entry name" value="Cytochrome c oxidase subunit 3"/>
    <property type="match status" value="1"/>
</dbReference>
<dbReference type="FunFam" id="1.20.120.80:FF:000002">
    <property type="entry name" value="Cytochrome c oxidase subunit 3"/>
    <property type="match status" value="1"/>
</dbReference>
<dbReference type="Gene3D" id="1.10.287.70">
    <property type="match status" value="1"/>
</dbReference>
<dbReference type="Gene3D" id="1.20.120.80">
    <property type="entry name" value="Cytochrome c oxidase, subunit III, four-helix bundle"/>
    <property type="match status" value="1"/>
</dbReference>
<dbReference type="InterPro" id="IPR024791">
    <property type="entry name" value="Cyt_c/ubiquinol_Oxase_su3"/>
</dbReference>
<dbReference type="InterPro" id="IPR033945">
    <property type="entry name" value="Cyt_c_oxase_su3_dom"/>
</dbReference>
<dbReference type="InterPro" id="IPR000298">
    <property type="entry name" value="Cyt_c_oxidase-like_su3"/>
</dbReference>
<dbReference type="InterPro" id="IPR035973">
    <property type="entry name" value="Cyt_c_oxidase_su3-like_sf"/>
</dbReference>
<dbReference type="InterPro" id="IPR013833">
    <property type="entry name" value="Cyt_c_oxidase_su3_a-hlx"/>
</dbReference>
<dbReference type="PANTHER" id="PTHR11403:SF7">
    <property type="entry name" value="CYTOCHROME C OXIDASE SUBUNIT 3"/>
    <property type="match status" value="1"/>
</dbReference>
<dbReference type="PANTHER" id="PTHR11403">
    <property type="entry name" value="CYTOCHROME C OXIDASE SUBUNIT III"/>
    <property type="match status" value="1"/>
</dbReference>
<dbReference type="Pfam" id="PF00510">
    <property type="entry name" value="COX3"/>
    <property type="match status" value="1"/>
</dbReference>
<dbReference type="SUPFAM" id="SSF81452">
    <property type="entry name" value="Cytochrome c oxidase subunit III-like"/>
    <property type="match status" value="1"/>
</dbReference>
<dbReference type="PROSITE" id="PS50253">
    <property type="entry name" value="COX3"/>
    <property type="match status" value="1"/>
</dbReference>
<comment type="function">
    <text evidence="2">Component of the cytochrome c oxidase, the last enzyme in the mitochondrial electron transport chain which drives oxidative phosphorylation. The respiratory chain contains 3 multisubunit complexes succinate dehydrogenase (complex II, CII), ubiquinol-cytochrome c oxidoreductase (cytochrome b-c1 complex, complex III, CIII) and cytochrome c oxidase (complex IV, CIV), that cooperate to transfer electrons derived from NADH and succinate to molecular oxygen, creating an electrochemical gradient over the inner membrane that drives transmembrane transport and the ATP synthase. Cytochrome c oxidase is the component of the respiratory chain that catalyzes the reduction of oxygen to water. Electrons originating from reduced cytochrome c in the intermembrane space (IMS) are transferred via the dinuclear copper A center (CU(A)) of subunit 2 and heme A of subunit 1 to the active site in subunit 1, a binuclear center (BNC) formed by heme A3 and copper B (CU(B)). The BNC reduces molecular oxygen to 2 water molecules using 4 electrons from cytochrome c in the IMS and 4 protons from the mitochondrial matrix.</text>
</comment>
<comment type="catalytic activity">
    <reaction evidence="2">
        <text>4 Fe(II)-[cytochrome c] + O2 + 8 H(+)(in) = 4 Fe(III)-[cytochrome c] + 2 H2O + 4 H(+)(out)</text>
        <dbReference type="Rhea" id="RHEA:11436"/>
        <dbReference type="Rhea" id="RHEA-COMP:10350"/>
        <dbReference type="Rhea" id="RHEA-COMP:14399"/>
        <dbReference type="ChEBI" id="CHEBI:15377"/>
        <dbReference type="ChEBI" id="CHEBI:15378"/>
        <dbReference type="ChEBI" id="CHEBI:15379"/>
        <dbReference type="ChEBI" id="CHEBI:29033"/>
        <dbReference type="ChEBI" id="CHEBI:29034"/>
        <dbReference type="EC" id="7.1.1.9"/>
    </reaction>
    <physiologicalReaction direction="left-to-right" evidence="2">
        <dbReference type="Rhea" id="RHEA:11437"/>
    </physiologicalReaction>
</comment>
<comment type="subunit">
    <text evidence="1">Component of the cytochrome c oxidase (complex IV, CIV), a multisubunit enzyme composed of 14 subunits. The complex is composed of a catalytic core of 3 subunits MT-CO1, MT-CO2 and MT-CO3, encoded in the mitochondrial DNA, and 11 supernumerary subunits COX4I, COX5A, COX5B, COX6A, COX6B, COX6C, COX7A, COX7B, COX7C, COX8 and NDUFA4, which are encoded in the nuclear genome. The complex exists as a monomer or a dimer and forms supercomplexes (SCs) in the inner mitochondrial membrane with NADH-ubiquinone oxidoreductase (complex I, CI) and ubiquinol-cytochrome c oxidoreductase (cytochrome b-c1 complex, complex III, CIII), resulting in different assemblies (supercomplex SCI(1)III(2)IV(1) and megacomplex MCI(2)III(2)IV(2)).</text>
</comment>
<comment type="subcellular location">
    <subcellularLocation>
        <location evidence="1">Mitochondrion inner membrane</location>
        <topology evidence="1">Multi-pass membrane protein</topology>
    </subcellularLocation>
</comment>
<comment type="similarity">
    <text evidence="3">Belongs to the cytochrome c oxidase subunit 3 family.</text>
</comment>
<reference key="1">
    <citation type="journal article" date="1998" name="J. Mol. Evol.">
        <title>The mitochondrial DNA molecule of the hagfish (Myxine glutinosa) and vertebrate phylogeny.</title>
        <authorList>
            <person name="Rasmussen A.S."/>
            <person name="Janke A."/>
            <person name="Arnason U."/>
        </authorList>
    </citation>
    <scope>NUCLEOTIDE SEQUENCE [GENOMIC DNA]</scope>
</reference>
<reference key="2">
    <citation type="journal article" date="2001" name="J. Mol. Evol.">
        <title>The complete mitochondrial genome of the hagfish Myxine glutinosa: unique features of the control region.</title>
        <authorList>
            <person name="Delarbre C."/>
            <person name="Rasmussen A.S."/>
            <person name="Arnason U."/>
            <person name="Gachelin G."/>
        </authorList>
    </citation>
    <scope>NUCLEOTIDE SEQUENCE [GENOMIC DNA]</scope>
</reference>
<protein>
    <recommendedName>
        <fullName>Cytochrome c oxidase subunit 3</fullName>
        <ecNumber>7.1.1.9</ecNumber>
    </recommendedName>
    <alternativeName>
        <fullName>Cytochrome c oxidase polypeptide III</fullName>
    </alternativeName>
</protein>
<gene>
    <name type="primary">MT-CO3</name>
    <name type="synonym">COIII</name>
    <name type="synonym">COXIII</name>
    <name type="synonym">MTCO3</name>
</gene>
<keyword id="KW-0472">Membrane</keyword>
<keyword id="KW-0496">Mitochondrion</keyword>
<keyword id="KW-0999">Mitochondrion inner membrane</keyword>
<keyword id="KW-1278">Translocase</keyword>
<keyword id="KW-0812">Transmembrane</keyword>
<keyword id="KW-1133">Transmembrane helix</keyword>
<organism>
    <name type="scientific">Myxine glutinosa</name>
    <name type="common">Atlantic hagfish</name>
    <dbReference type="NCBI Taxonomy" id="7769"/>
    <lineage>
        <taxon>Eukaryota</taxon>
        <taxon>Metazoa</taxon>
        <taxon>Chordata</taxon>
        <taxon>Craniata</taxon>
        <taxon>Vertebrata</taxon>
        <taxon>Cyclostomata</taxon>
        <taxon>Myxini</taxon>
        <taxon>Myxiniformes</taxon>
        <taxon>Myxinidae</taxon>
        <taxon>Myxininae</taxon>
        <taxon>Myxine</taxon>
    </lineage>
</organism>
<accession>O63915</accession>
<feature type="chain" id="PRO_0000183811" description="Cytochrome c oxidase subunit 3">
    <location>
        <begin position="1"/>
        <end position="261"/>
    </location>
</feature>
<feature type="topological domain" description="Mitochondrial matrix" evidence="1">
    <location>
        <begin position="1"/>
        <end position="15"/>
    </location>
</feature>
<feature type="transmembrane region" description="Helical; Name=I" evidence="1">
    <location>
        <begin position="16"/>
        <end position="34"/>
    </location>
</feature>
<feature type="topological domain" description="Mitochondrial intermembrane" evidence="1">
    <location>
        <begin position="35"/>
        <end position="40"/>
    </location>
</feature>
<feature type="transmembrane region" description="Helical; Name=II" evidence="1">
    <location>
        <begin position="41"/>
        <end position="66"/>
    </location>
</feature>
<feature type="topological domain" description="Mitochondrial matrix" evidence="1">
    <location>
        <begin position="67"/>
        <end position="72"/>
    </location>
</feature>
<feature type="transmembrane region" description="Helical; Name=III" evidence="1">
    <location>
        <begin position="73"/>
        <end position="105"/>
    </location>
</feature>
<feature type="topological domain" description="Mitochondrial intermembrane" evidence="1">
    <location>
        <begin position="106"/>
        <end position="128"/>
    </location>
</feature>
<feature type="transmembrane region" description="Helical; Name=IV" evidence="1">
    <location>
        <begin position="129"/>
        <end position="152"/>
    </location>
</feature>
<feature type="topological domain" description="Mitochondrial matrix" evidence="1">
    <location>
        <begin position="153"/>
        <end position="155"/>
    </location>
</feature>
<feature type="transmembrane region" description="Helical; Name=V" evidence="1">
    <location>
        <begin position="156"/>
        <end position="183"/>
    </location>
</feature>
<feature type="topological domain" description="Mitochondrial intermembrane" evidence="1">
    <location>
        <begin position="184"/>
        <end position="190"/>
    </location>
</feature>
<feature type="transmembrane region" description="Helical; Name=VI" evidence="1">
    <location>
        <begin position="191"/>
        <end position="223"/>
    </location>
</feature>
<feature type="topological domain" description="Mitochondrial matrix" evidence="1">
    <location>
        <begin position="224"/>
        <end position="232"/>
    </location>
</feature>
<feature type="transmembrane region" description="Helical; Name=VII" evidence="1">
    <location>
        <begin position="233"/>
        <end position="256"/>
    </location>
</feature>
<feature type="topological domain" description="Mitochondrial intermembrane" evidence="1">
    <location>
        <begin position="257"/>
        <end position="261"/>
    </location>
</feature>
<sequence length="261" mass="30052">MTKQMHAFHMVNPSPWPLTGAASAFMLTSGLAMWFHKHSNTLIFLSMILMLLTMYQWWRDITREGTFQGHHTSLVQKSLRYGMILFIVSEVCFFFGFFWTFYHSSLSPSPDLGMMWPPKGVIPLDPFEIPLLNTAILLGSGVSVTWAHHSLMEKTHKDMVISLSITIILGIYFTLLQGMEYFNSTFNISDNAYGSTFFVATGFHGGHVIIGTLFLTVCLLRQLMFHFTSSHHFGFEAAAWYWHFVDVVWLFLFISIYWWGS</sequence>